<sequence>MPVVRKIFRRRRGDSESEEDEQDSEEVRLKLEETREVQNLRKRPNGVSAVALLVGEKVQEETTLVDDPFQMKTGGMVDMKKLKERGKDKISEEEDLHLGTSFSAETNRRDEDADMMKYIETELKKRKGIVEHEEQKVKPKNAEDCLYELPENIRVSSAKKTEEMLSNQMLSGIPEVDLGIDAKIKNIISTEDAKARLLAEQQNKKKDSETSFVPTNMAVNYVQHNRFYHEELNAPIRRNKEEPKARPLRVGDTEKPEPERSPPNRKRPANEKATDDYHYEKFKKMNRRY</sequence>
<protein>
    <recommendedName>
        <fullName evidence="5">Splicing factor C9orf78</fullName>
    </recommendedName>
    <alternativeName>
        <fullName>Hepatocellular carcinoma-associated antigen 59</fullName>
    </alternativeName>
</protein>
<reference key="1">
    <citation type="journal article" date="2002" name="J. Immunol.">
        <title>Large scale identification of human hepatocellular carcinoma-associated antigens by autoantibodies.</title>
        <authorList>
            <person name="Wang Y."/>
            <person name="Han K.-J."/>
            <person name="Pang X.-W."/>
            <person name="Vaughan H.A."/>
            <person name="Qu W."/>
            <person name="Dong X.-Y."/>
            <person name="Peng J.-R."/>
            <person name="Zhao H.-T."/>
            <person name="Rui J.-A."/>
            <person name="Leng X.-S."/>
            <person name="Cebon J."/>
            <person name="Burgess A.W."/>
            <person name="Chen W.-F."/>
        </authorList>
    </citation>
    <scope>NUCLEOTIDE SEQUENCE [MRNA]</scope>
    <source>
        <tissue>Hepatoma</tissue>
    </source>
</reference>
<reference key="2">
    <citation type="journal article" date="2004" name="Nat. Genet.">
        <title>Complete sequencing and characterization of 21,243 full-length human cDNAs.</title>
        <authorList>
            <person name="Ota T."/>
            <person name="Suzuki Y."/>
            <person name="Nishikawa T."/>
            <person name="Otsuki T."/>
            <person name="Sugiyama T."/>
            <person name="Irie R."/>
            <person name="Wakamatsu A."/>
            <person name="Hayashi K."/>
            <person name="Sato H."/>
            <person name="Nagai K."/>
            <person name="Kimura K."/>
            <person name="Makita H."/>
            <person name="Sekine M."/>
            <person name="Obayashi M."/>
            <person name="Nishi T."/>
            <person name="Shibahara T."/>
            <person name="Tanaka T."/>
            <person name="Ishii S."/>
            <person name="Yamamoto J."/>
            <person name="Saito K."/>
            <person name="Kawai Y."/>
            <person name="Isono Y."/>
            <person name="Nakamura Y."/>
            <person name="Nagahari K."/>
            <person name="Murakami K."/>
            <person name="Yasuda T."/>
            <person name="Iwayanagi T."/>
            <person name="Wagatsuma M."/>
            <person name="Shiratori A."/>
            <person name="Sudo H."/>
            <person name="Hosoiri T."/>
            <person name="Kaku Y."/>
            <person name="Kodaira H."/>
            <person name="Kondo H."/>
            <person name="Sugawara M."/>
            <person name="Takahashi M."/>
            <person name="Kanda K."/>
            <person name="Yokoi T."/>
            <person name="Furuya T."/>
            <person name="Kikkawa E."/>
            <person name="Omura Y."/>
            <person name="Abe K."/>
            <person name="Kamihara K."/>
            <person name="Katsuta N."/>
            <person name="Sato K."/>
            <person name="Tanikawa M."/>
            <person name="Yamazaki M."/>
            <person name="Ninomiya K."/>
            <person name="Ishibashi T."/>
            <person name="Yamashita H."/>
            <person name="Murakawa K."/>
            <person name="Fujimori K."/>
            <person name="Tanai H."/>
            <person name="Kimata M."/>
            <person name="Watanabe M."/>
            <person name="Hiraoka S."/>
            <person name="Chiba Y."/>
            <person name="Ishida S."/>
            <person name="Ono Y."/>
            <person name="Takiguchi S."/>
            <person name="Watanabe S."/>
            <person name="Yosida M."/>
            <person name="Hotuta T."/>
            <person name="Kusano J."/>
            <person name="Kanehori K."/>
            <person name="Takahashi-Fujii A."/>
            <person name="Hara H."/>
            <person name="Tanase T.-O."/>
            <person name="Nomura Y."/>
            <person name="Togiya S."/>
            <person name="Komai F."/>
            <person name="Hara R."/>
            <person name="Takeuchi K."/>
            <person name="Arita M."/>
            <person name="Imose N."/>
            <person name="Musashino K."/>
            <person name="Yuuki H."/>
            <person name="Oshima A."/>
            <person name="Sasaki N."/>
            <person name="Aotsuka S."/>
            <person name="Yoshikawa Y."/>
            <person name="Matsunawa H."/>
            <person name="Ichihara T."/>
            <person name="Shiohata N."/>
            <person name="Sano S."/>
            <person name="Moriya S."/>
            <person name="Momiyama H."/>
            <person name="Satoh N."/>
            <person name="Takami S."/>
            <person name="Terashima Y."/>
            <person name="Suzuki O."/>
            <person name="Nakagawa S."/>
            <person name="Senoh A."/>
            <person name="Mizoguchi H."/>
            <person name="Goto Y."/>
            <person name="Shimizu F."/>
            <person name="Wakebe H."/>
            <person name="Hishigaki H."/>
            <person name="Watanabe T."/>
            <person name="Sugiyama A."/>
            <person name="Takemoto M."/>
            <person name="Kawakami B."/>
            <person name="Yamazaki M."/>
            <person name="Watanabe K."/>
            <person name="Kumagai A."/>
            <person name="Itakura S."/>
            <person name="Fukuzumi Y."/>
            <person name="Fujimori Y."/>
            <person name="Komiyama M."/>
            <person name="Tashiro H."/>
            <person name="Tanigami A."/>
            <person name="Fujiwara T."/>
            <person name="Ono T."/>
            <person name="Yamada K."/>
            <person name="Fujii Y."/>
            <person name="Ozaki K."/>
            <person name="Hirao M."/>
            <person name="Ohmori Y."/>
            <person name="Kawabata A."/>
            <person name="Hikiji T."/>
            <person name="Kobatake N."/>
            <person name="Inagaki H."/>
            <person name="Ikema Y."/>
            <person name="Okamoto S."/>
            <person name="Okitani R."/>
            <person name="Kawakami T."/>
            <person name="Noguchi S."/>
            <person name="Itoh T."/>
            <person name="Shigeta K."/>
            <person name="Senba T."/>
            <person name="Matsumura K."/>
            <person name="Nakajima Y."/>
            <person name="Mizuno T."/>
            <person name="Morinaga M."/>
            <person name="Sasaki M."/>
            <person name="Togashi T."/>
            <person name="Oyama M."/>
            <person name="Hata H."/>
            <person name="Watanabe M."/>
            <person name="Komatsu T."/>
            <person name="Mizushima-Sugano J."/>
            <person name="Satoh T."/>
            <person name="Shirai Y."/>
            <person name="Takahashi Y."/>
            <person name="Nakagawa K."/>
            <person name="Okumura K."/>
            <person name="Nagase T."/>
            <person name="Nomura N."/>
            <person name="Kikuchi H."/>
            <person name="Masuho Y."/>
            <person name="Yamashita R."/>
            <person name="Nakai K."/>
            <person name="Yada T."/>
            <person name="Nakamura Y."/>
            <person name="Ohara O."/>
            <person name="Isogai T."/>
            <person name="Sugano S."/>
        </authorList>
    </citation>
    <scope>NUCLEOTIDE SEQUENCE [LARGE SCALE MRNA]</scope>
    <source>
        <tissue>Skeletal muscle</tissue>
    </source>
</reference>
<reference key="3">
    <citation type="journal article" date="2004" name="Nature">
        <title>DNA sequence and analysis of human chromosome 9.</title>
        <authorList>
            <person name="Humphray S.J."/>
            <person name="Oliver K."/>
            <person name="Hunt A.R."/>
            <person name="Plumb R.W."/>
            <person name="Loveland J.E."/>
            <person name="Howe K.L."/>
            <person name="Andrews T.D."/>
            <person name="Searle S."/>
            <person name="Hunt S.E."/>
            <person name="Scott C.E."/>
            <person name="Jones M.C."/>
            <person name="Ainscough R."/>
            <person name="Almeida J.P."/>
            <person name="Ambrose K.D."/>
            <person name="Ashwell R.I.S."/>
            <person name="Babbage A.K."/>
            <person name="Babbage S."/>
            <person name="Bagguley C.L."/>
            <person name="Bailey J."/>
            <person name="Banerjee R."/>
            <person name="Barker D.J."/>
            <person name="Barlow K.F."/>
            <person name="Bates K."/>
            <person name="Beasley H."/>
            <person name="Beasley O."/>
            <person name="Bird C.P."/>
            <person name="Bray-Allen S."/>
            <person name="Brown A.J."/>
            <person name="Brown J.Y."/>
            <person name="Burford D."/>
            <person name="Burrill W."/>
            <person name="Burton J."/>
            <person name="Carder C."/>
            <person name="Carter N.P."/>
            <person name="Chapman J.C."/>
            <person name="Chen Y."/>
            <person name="Clarke G."/>
            <person name="Clark S.Y."/>
            <person name="Clee C.M."/>
            <person name="Clegg S."/>
            <person name="Collier R.E."/>
            <person name="Corby N."/>
            <person name="Crosier M."/>
            <person name="Cummings A.T."/>
            <person name="Davies J."/>
            <person name="Dhami P."/>
            <person name="Dunn M."/>
            <person name="Dutta I."/>
            <person name="Dyer L.W."/>
            <person name="Earthrowl M.E."/>
            <person name="Faulkner L."/>
            <person name="Fleming C.J."/>
            <person name="Frankish A."/>
            <person name="Frankland J.A."/>
            <person name="French L."/>
            <person name="Fricker D.G."/>
            <person name="Garner P."/>
            <person name="Garnett J."/>
            <person name="Ghori J."/>
            <person name="Gilbert J.G.R."/>
            <person name="Glison C."/>
            <person name="Grafham D.V."/>
            <person name="Gribble S."/>
            <person name="Griffiths C."/>
            <person name="Griffiths-Jones S."/>
            <person name="Grocock R."/>
            <person name="Guy J."/>
            <person name="Hall R.E."/>
            <person name="Hammond S."/>
            <person name="Harley J.L."/>
            <person name="Harrison E.S.I."/>
            <person name="Hart E.A."/>
            <person name="Heath P.D."/>
            <person name="Henderson C.D."/>
            <person name="Hopkins B.L."/>
            <person name="Howard P.J."/>
            <person name="Howden P.J."/>
            <person name="Huckle E."/>
            <person name="Johnson C."/>
            <person name="Johnson D."/>
            <person name="Joy A.A."/>
            <person name="Kay M."/>
            <person name="Keenan S."/>
            <person name="Kershaw J.K."/>
            <person name="Kimberley A.M."/>
            <person name="King A."/>
            <person name="Knights A."/>
            <person name="Laird G.K."/>
            <person name="Langford C."/>
            <person name="Lawlor S."/>
            <person name="Leongamornlert D.A."/>
            <person name="Leversha M."/>
            <person name="Lloyd C."/>
            <person name="Lloyd D.M."/>
            <person name="Lovell J."/>
            <person name="Martin S."/>
            <person name="Mashreghi-Mohammadi M."/>
            <person name="Matthews L."/>
            <person name="McLaren S."/>
            <person name="McLay K.E."/>
            <person name="McMurray A."/>
            <person name="Milne S."/>
            <person name="Nickerson T."/>
            <person name="Nisbett J."/>
            <person name="Nordsiek G."/>
            <person name="Pearce A.V."/>
            <person name="Peck A.I."/>
            <person name="Porter K.M."/>
            <person name="Pandian R."/>
            <person name="Pelan S."/>
            <person name="Phillimore B."/>
            <person name="Povey S."/>
            <person name="Ramsey Y."/>
            <person name="Rand V."/>
            <person name="Scharfe M."/>
            <person name="Sehra H.K."/>
            <person name="Shownkeen R."/>
            <person name="Sims S.K."/>
            <person name="Skuce C.D."/>
            <person name="Smith M."/>
            <person name="Steward C.A."/>
            <person name="Swarbreck D."/>
            <person name="Sycamore N."/>
            <person name="Tester J."/>
            <person name="Thorpe A."/>
            <person name="Tracey A."/>
            <person name="Tromans A."/>
            <person name="Thomas D.W."/>
            <person name="Wall M."/>
            <person name="Wallis J.M."/>
            <person name="West A.P."/>
            <person name="Whitehead S.L."/>
            <person name="Willey D.L."/>
            <person name="Williams S.A."/>
            <person name="Wilming L."/>
            <person name="Wray P.W."/>
            <person name="Young L."/>
            <person name="Ashurst J.L."/>
            <person name="Coulson A."/>
            <person name="Blocker H."/>
            <person name="Durbin R.M."/>
            <person name="Sulston J.E."/>
            <person name="Hubbard T."/>
            <person name="Jackson M.J."/>
            <person name="Bentley D.R."/>
            <person name="Beck S."/>
            <person name="Rogers J."/>
            <person name="Dunham I."/>
        </authorList>
    </citation>
    <scope>NUCLEOTIDE SEQUENCE [LARGE SCALE GENOMIC DNA]</scope>
</reference>
<reference key="4">
    <citation type="submission" date="2005-07" db="EMBL/GenBank/DDBJ databases">
        <authorList>
            <person name="Mural R.J."/>
            <person name="Istrail S."/>
            <person name="Sutton G.G."/>
            <person name="Florea L."/>
            <person name="Halpern A.L."/>
            <person name="Mobarry C.M."/>
            <person name="Lippert R."/>
            <person name="Walenz B."/>
            <person name="Shatkay H."/>
            <person name="Dew I."/>
            <person name="Miller J.R."/>
            <person name="Flanigan M.J."/>
            <person name="Edwards N.J."/>
            <person name="Bolanos R."/>
            <person name="Fasulo D."/>
            <person name="Halldorsson B.V."/>
            <person name="Hannenhalli S."/>
            <person name="Turner R."/>
            <person name="Yooseph S."/>
            <person name="Lu F."/>
            <person name="Nusskern D.R."/>
            <person name="Shue B.C."/>
            <person name="Zheng X.H."/>
            <person name="Zhong F."/>
            <person name="Delcher A.L."/>
            <person name="Huson D.H."/>
            <person name="Kravitz S.A."/>
            <person name="Mouchard L."/>
            <person name="Reinert K."/>
            <person name="Remington K.A."/>
            <person name="Clark A.G."/>
            <person name="Waterman M.S."/>
            <person name="Eichler E.E."/>
            <person name="Adams M.D."/>
            <person name="Hunkapiller M.W."/>
            <person name="Myers E.W."/>
            <person name="Venter J.C."/>
        </authorList>
    </citation>
    <scope>NUCLEOTIDE SEQUENCE [LARGE SCALE GENOMIC DNA]</scope>
</reference>
<reference key="5">
    <citation type="journal article" date="2004" name="Genome Res.">
        <title>The status, quality, and expansion of the NIH full-length cDNA project: the Mammalian Gene Collection (MGC).</title>
        <authorList>
            <consortium name="The MGC Project Team"/>
        </authorList>
    </citation>
    <scope>NUCLEOTIDE SEQUENCE [LARGE SCALE MRNA]</scope>
    <source>
        <tissue>Bone marrow</tissue>
        <tissue>Placenta</tissue>
    </source>
</reference>
<reference key="6">
    <citation type="journal article" date="2007" name="BMC Genomics">
        <title>The full-ORF clone resource of the German cDNA consortium.</title>
        <authorList>
            <person name="Bechtel S."/>
            <person name="Rosenfelder H."/>
            <person name="Duda A."/>
            <person name="Schmidt C.P."/>
            <person name="Ernst U."/>
            <person name="Wellenreuther R."/>
            <person name="Mehrle A."/>
            <person name="Schuster C."/>
            <person name="Bahr A."/>
            <person name="Bloecker H."/>
            <person name="Heubner D."/>
            <person name="Hoerlein A."/>
            <person name="Michel G."/>
            <person name="Wedler H."/>
            <person name="Koehrer K."/>
            <person name="Ottenwaelder B."/>
            <person name="Poustka A."/>
            <person name="Wiemann S."/>
            <person name="Schupp I."/>
        </authorList>
    </citation>
    <scope>NUCLEOTIDE SEQUENCE [LARGE SCALE MRNA] OF 49-289</scope>
    <source>
        <tissue>Testis</tissue>
    </source>
</reference>
<reference key="7">
    <citation type="journal article" date="2005" name="Nat. Biotechnol.">
        <title>Immunoaffinity profiling of tyrosine phosphorylation in cancer cells.</title>
        <authorList>
            <person name="Rush J."/>
            <person name="Moritz A."/>
            <person name="Lee K.A."/>
            <person name="Guo A."/>
            <person name="Goss V.L."/>
            <person name="Spek E.J."/>
            <person name="Zhang H."/>
            <person name="Zha X.-M."/>
            <person name="Polakiewicz R.D."/>
            <person name="Comb M.J."/>
        </authorList>
    </citation>
    <scope>PHOSPHORYLATION [LARGE SCALE ANALYSIS] AT TYR-147</scope>
    <scope>IDENTIFICATION BY MASS SPECTROMETRY [LARGE SCALE ANALYSIS]</scope>
</reference>
<reference key="8">
    <citation type="journal article" date="2006" name="Cell">
        <title>Global, in vivo, and site-specific phosphorylation dynamics in signaling networks.</title>
        <authorList>
            <person name="Olsen J.V."/>
            <person name="Blagoev B."/>
            <person name="Gnad F."/>
            <person name="Macek B."/>
            <person name="Kumar C."/>
            <person name="Mortensen P."/>
            <person name="Mann M."/>
        </authorList>
    </citation>
    <scope>PHOSPHORYLATION [LARGE SCALE ANALYSIS] AT SER-261</scope>
    <scope>IDENTIFICATION BY MASS SPECTROMETRY [LARGE SCALE ANALYSIS]</scope>
    <source>
        <tissue>Cervix carcinoma</tissue>
    </source>
</reference>
<reference key="9">
    <citation type="journal article" date="2008" name="J. Proteome Res.">
        <title>Phosphorylation analysis of primary human T lymphocytes using sequential IMAC and titanium oxide enrichment.</title>
        <authorList>
            <person name="Carrascal M."/>
            <person name="Ovelleiro D."/>
            <person name="Casas V."/>
            <person name="Gay M."/>
            <person name="Abian J."/>
        </authorList>
    </citation>
    <scope>IDENTIFICATION BY MASS SPECTROMETRY [LARGE SCALE ANALYSIS]</scope>
    <source>
        <tissue>T-cell</tissue>
    </source>
</reference>
<reference key="10">
    <citation type="journal article" date="2008" name="Proc. Natl. Acad. Sci. U.S.A.">
        <title>A quantitative atlas of mitotic phosphorylation.</title>
        <authorList>
            <person name="Dephoure N."/>
            <person name="Zhou C."/>
            <person name="Villen J."/>
            <person name="Beausoleil S.A."/>
            <person name="Bakalarski C.E."/>
            <person name="Elledge S.J."/>
            <person name="Gygi S.P."/>
        </authorList>
    </citation>
    <scope>PHOSPHORYLATION [LARGE SCALE ANALYSIS] AT SER-15; SER-17 AND SER-261</scope>
    <scope>IDENTIFICATION BY MASS SPECTROMETRY [LARGE SCALE ANALYSIS]</scope>
    <source>
        <tissue>Cervix carcinoma</tissue>
    </source>
</reference>
<reference key="11">
    <citation type="journal article" date="2009" name="Sci. Signal.">
        <title>Quantitative phosphoproteomic analysis of T cell receptor signaling reveals system-wide modulation of protein-protein interactions.</title>
        <authorList>
            <person name="Mayya V."/>
            <person name="Lundgren D.H."/>
            <person name="Hwang S.-I."/>
            <person name="Rezaul K."/>
            <person name="Wu L."/>
            <person name="Eng J.K."/>
            <person name="Rodionov V."/>
            <person name="Han D.K."/>
        </authorList>
    </citation>
    <scope>PHOSPHORYLATION [LARGE SCALE ANALYSIS] AT SER-15 AND SER-17</scope>
    <scope>IDENTIFICATION BY MASS SPECTROMETRY [LARGE SCALE ANALYSIS]</scope>
    <source>
        <tissue>Leukemic T-cell</tissue>
    </source>
</reference>
<reference key="12">
    <citation type="journal article" date="2010" name="Sci. Signal.">
        <title>Quantitative phosphoproteomics reveals widespread full phosphorylation site occupancy during mitosis.</title>
        <authorList>
            <person name="Olsen J.V."/>
            <person name="Vermeulen M."/>
            <person name="Santamaria A."/>
            <person name="Kumar C."/>
            <person name="Miller M.L."/>
            <person name="Jensen L.J."/>
            <person name="Gnad F."/>
            <person name="Cox J."/>
            <person name="Jensen T.S."/>
            <person name="Nigg E.A."/>
            <person name="Brunak S."/>
            <person name="Mann M."/>
        </authorList>
    </citation>
    <scope>PHOSPHORYLATION [LARGE SCALE ANALYSIS] AT SER-15; SER-17; THR-253 AND SER-261</scope>
    <scope>IDENTIFICATION BY MASS SPECTROMETRY [LARGE SCALE ANALYSIS]</scope>
    <source>
        <tissue>Cervix carcinoma</tissue>
    </source>
</reference>
<reference key="13">
    <citation type="journal article" date="2011" name="BMC Syst. Biol.">
        <title>Initial characterization of the human central proteome.</title>
        <authorList>
            <person name="Burkard T.R."/>
            <person name="Planyavsky M."/>
            <person name="Kaupe I."/>
            <person name="Breitwieser F.P."/>
            <person name="Buerckstuemmer T."/>
            <person name="Bennett K.L."/>
            <person name="Superti-Furga G."/>
            <person name="Colinge J."/>
        </authorList>
    </citation>
    <scope>IDENTIFICATION BY MASS SPECTROMETRY [LARGE SCALE ANALYSIS]</scope>
</reference>
<reference key="14">
    <citation type="journal article" date="2011" name="Sci. Signal.">
        <title>System-wide temporal characterization of the proteome and phosphoproteome of human embryonic stem cell differentiation.</title>
        <authorList>
            <person name="Rigbolt K.T."/>
            <person name="Prokhorova T.A."/>
            <person name="Akimov V."/>
            <person name="Henningsen J."/>
            <person name="Johansen P.T."/>
            <person name="Kratchmarova I."/>
            <person name="Kassem M."/>
            <person name="Mann M."/>
            <person name="Olsen J.V."/>
            <person name="Blagoev B."/>
        </authorList>
    </citation>
    <scope>PHOSPHORYLATION [LARGE SCALE ANALYSIS] AT SER-261</scope>
    <scope>IDENTIFICATION BY MASS SPECTROMETRY [LARGE SCALE ANALYSIS]</scope>
</reference>
<reference key="15">
    <citation type="journal article" date="2012" name="Proc. Natl. Acad. Sci. U.S.A.">
        <title>N-terminal acetylome analyses and functional insights of the N-terminal acetyltransferase NatB.</title>
        <authorList>
            <person name="Van Damme P."/>
            <person name="Lasa M."/>
            <person name="Polevoda B."/>
            <person name="Gazquez C."/>
            <person name="Elosegui-Artola A."/>
            <person name="Kim D.S."/>
            <person name="De Juan-Pardo E."/>
            <person name="Demeyer K."/>
            <person name="Hole K."/>
            <person name="Larrea E."/>
            <person name="Timmerman E."/>
            <person name="Prieto J."/>
            <person name="Arnesen T."/>
            <person name="Sherman F."/>
            <person name="Gevaert K."/>
            <person name="Aldabe R."/>
        </authorList>
    </citation>
    <scope>IDENTIFICATION BY MASS SPECTROMETRY [LARGE SCALE ANALYSIS]</scope>
</reference>
<reference key="16">
    <citation type="journal article" date="2013" name="J. Proteome Res.">
        <title>Toward a comprehensive characterization of a human cancer cell phosphoproteome.</title>
        <authorList>
            <person name="Zhou H."/>
            <person name="Di Palma S."/>
            <person name="Preisinger C."/>
            <person name="Peng M."/>
            <person name="Polat A.N."/>
            <person name="Heck A.J."/>
            <person name="Mohammed S."/>
        </authorList>
    </citation>
    <scope>PHOSPHORYLATION [LARGE SCALE ANALYSIS] AT SER-15; SER-17 AND SER-261</scope>
    <scope>IDENTIFICATION BY MASS SPECTROMETRY [LARGE SCALE ANALYSIS]</scope>
    <source>
        <tissue>Cervix carcinoma</tissue>
        <tissue>Erythroleukemia</tissue>
    </source>
</reference>
<reference key="17">
    <citation type="journal article" date="2014" name="J. Proteomics">
        <title>An enzyme assisted RP-RPLC approach for in-depth analysis of human liver phosphoproteome.</title>
        <authorList>
            <person name="Bian Y."/>
            <person name="Song C."/>
            <person name="Cheng K."/>
            <person name="Dong M."/>
            <person name="Wang F."/>
            <person name="Huang J."/>
            <person name="Sun D."/>
            <person name="Wang L."/>
            <person name="Ye M."/>
            <person name="Zou H."/>
        </authorList>
    </citation>
    <scope>PHOSPHORYLATION [LARGE SCALE ANALYSIS] AT THR-253</scope>
    <scope>IDENTIFICATION BY MASS SPECTROMETRY [LARGE SCALE ANALYSIS]</scope>
    <source>
        <tissue>Liver</tissue>
    </source>
</reference>
<reference key="18">
    <citation type="journal article" date="2022" name="Exp. Cell Res.">
        <title>C9ORF78 partially localizes to centromeres and plays a role in chromosome segregation.</title>
        <authorList>
            <person name="Koranne R."/>
            <person name="Brown K."/>
            <person name="Vandenbroek H."/>
            <person name="Taylor W.R."/>
        </authorList>
    </citation>
    <scope>FUNCTION</scope>
    <scope>INTERACTION WITH PRPF8</scope>
    <scope>SUBCELLULAR LOCATION</scope>
</reference>
<reference evidence="6" key="19">
    <citation type="journal article" date="2022" name="Nat. Commun.">
        <title>A multi-factor trafficking site on the spliceosome remodeling enzyme BRR2 recruits C9ORF78 to regulate alternative splicing.</title>
        <authorList>
            <person name="Bergfort A."/>
            <person name="Preussner M."/>
            <person name="Kuropka B."/>
            <person name="Ilik I.A."/>
            <person name="Hilal T."/>
            <person name="Weber G."/>
            <person name="Freund C."/>
            <person name="Aktas T."/>
            <person name="Heyd F."/>
            <person name="Wahl M.C."/>
        </authorList>
    </citation>
    <scope>STRUCTURE BY ELECTRON MICROSCOPY (2.76 ANGSTROMS) IN COMPLEX WITH SNRNP200 AND PRPF8</scope>
    <scope>FUNCTION</scope>
    <scope>IDENTIFICATION IN THE SPLICEOSOME COMPLEX</scope>
    <scope>INTERACTION WITH PRPF8 AND SNRNP200</scope>
    <scope>MUTAGENESIS OF PHE-8 AND ARG-41</scope>
</reference>
<comment type="function">
    <text evidence="2 3">Plays a role in pre-mRNA splicing by promoting usage of the upstream 3'-splice site at alternative NAGNAG splice sites; these are sites featuring alternative acceptor motifs separated by only a few nucleotides (PubMed:35241646). May also modulate exon inclusion events (PubMed:35241646). Plays a role in spliceosomal remodeling by displacing WBP4 from SNRNP200 and may act to inhibit SNRNP200 helicase activity (PubMed:35241646). Binds U5 snRNA (PubMed:35241646). Required for proper chromosome segregation (PubMed:35167828). Not required for splicing of shelterin components (PubMed:35167828).</text>
</comment>
<comment type="subunit">
    <text evidence="2 3">Component of the spliceosome (PubMed:35241646). Interacts with SNRNP200; the interaction is direct (PubMed:35241646). Interacts with PRPF8 (PubMed:35167828, PubMed:35241646).</text>
</comment>
<comment type="interaction">
    <interactant intactId="EBI-2557577">
        <id>Q9NZ63</id>
    </interactant>
    <interactant intactId="EBI-750109">
        <id>Q9NYB0</id>
        <label>TERF2IP</label>
    </interactant>
    <organismsDiffer>false</organismsDiffer>
    <experiments>2</experiments>
</comment>
<comment type="subcellular location">
    <subcellularLocation>
        <location evidence="2">Nucleus</location>
    </subcellularLocation>
    <subcellularLocation>
        <location evidence="2">Chromosome</location>
        <location evidence="2">Centromere</location>
    </subcellularLocation>
    <text evidence="2">Dispersed throughout the nucleus during interphase (PubMed:35167828). Colocalizes with microtubule attachment sites at centromeres following mitotic checkpoint activation (PubMed:35167828).</text>
</comment>
<comment type="similarity">
    <text evidence="5">Belongs to the TLS1 family.</text>
</comment>
<gene>
    <name type="primary">C9orf78</name>
    <name evidence="4" type="synonym">HCA59</name>
</gene>
<dbReference type="EMBL" id="AF218421">
    <property type="protein sequence ID" value="AAF37561.1"/>
    <property type="molecule type" value="mRNA"/>
</dbReference>
<dbReference type="EMBL" id="AK057004">
    <property type="protein sequence ID" value="BAG51840.1"/>
    <property type="molecule type" value="mRNA"/>
</dbReference>
<dbReference type="EMBL" id="AL158207">
    <property type="status" value="NOT_ANNOTATED_CDS"/>
    <property type="molecule type" value="Genomic_DNA"/>
</dbReference>
<dbReference type="EMBL" id="CH471090">
    <property type="protein sequence ID" value="EAW87910.1"/>
    <property type="molecule type" value="Genomic_DNA"/>
</dbReference>
<dbReference type="EMBL" id="BC007664">
    <property type="protein sequence ID" value="AAH07664.1"/>
    <property type="molecule type" value="mRNA"/>
</dbReference>
<dbReference type="EMBL" id="BC017570">
    <property type="protein sequence ID" value="AAH17570.1"/>
    <property type="molecule type" value="mRNA"/>
</dbReference>
<dbReference type="EMBL" id="AL137549">
    <property type="protein sequence ID" value="CAB70805.1"/>
    <property type="molecule type" value="mRNA"/>
</dbReference>
<dbReference type="CCDS" id="CCDS6931.1"/>
<dbReference type="PIR" id="T46390">
    <property type="entry name" value="T46390"/>
</dbReference>
<dbReference type="RefSeq" id="NP_057604.1">
    <property type="nucleotide sequence ID" value="NM_016520.3"/>
</dbReference>
<dbReference type="PDB" id="7OS2">
    <property type="method" value="EM"/>
    <property type="resolution" value="2.76 A"/>
    <property type="chains" value="C=1-289"/>
</dbReference>
<dbReference type="PDB" id="8C6J">
    <property type="method" value="EM"/>
    <property type="resolution" value="2.80 A"/>
    <property type="chains" value="CT=1-289"/>
</dbReference>
<dbReference type="PDB" id="9FMD">
    <property type="method" value="EM"/>
    <property type="resolution" value="3.30 A"/>
    <property type="chains" value="x=1-289"/>
</dbReference>
<dbReference type="PDBsum" id="7OS2"/>
<dbReference type="PDBsum" id="8C6J"/>
<dbReference type="PDBsum" id="9FMD"/>
<dbReference type="EMDB" id="EMD-13046"/>
<dbReference type="EMDB" id="EMD-16452"/>
<dbReference type="SMR" id="Q9NZ63"/>
<dbReference type="BioGRID" id="119716">
    <property type="interactions" value="629"/>
</dbReference>
<dbReference type="FunCoup" id="Q9NZ63">
    <property type="interactions" value="3880"/>
</dbReference>
<dbReference type="IntAct" id="Q9NZ63">
    <property type="interactions" value="46"/>
</dbReference>
<dbReference type="MINT" id="Q9NZ63"/>
<dbReference type="STRING" id="9606.ENSP00000361524"/>
<dbReference type="GlyGen" id="Q9NZ63">
    <property type="glycosylation" value="1 site, 1 O-linked glycan (1 site)"/>
</dbReference>
<dbReference type="iPTMnet" id="Q9NZ63"/>
<dbReference type="MetOSite" id="Q9NZ63"/>
<dbReference type="PhosphoSitePlus" id="Q9NZ63"/>
<dbReference type="BioMuta" id="C9orf78"/>
<dbReference type="DMDM" id="74753081"/>
<dbReference type="jPOST" id="Q9NZ63"/>
<dbReference type="MassIVE" id="Q9NZ63"/>
<dbReference type="PaxDb" id="9606-ENSP00000361524"/>
<dbReference type="PeptideAtlas" id="Q9NZ63"/>
<dbReference type="ProteomicsDB" id="83329"/>
<dbReference type="Pumba" id="Q9NZ63"/>
<dbReference type="TopDownProteomics" id="Q9NZ63"/>
<dbReference type="Antibodypedia" id="17917">
    <property type="antibodies" value="116 antibodies from 23 providers"/>
</dbReference>
<dbReference type="DNASU" id="51759"/>
<dbReference type="Ensembl" id="ENST00000372447.7">
    <property type="protein sequence ID" value="ENSP00000361524.3"/>
    <property type="gene ID" value="ENSG00000136819.15"/>
</dbReference>
<dbReference type="GeneID" id="51759"/>
<dbReference type="KEGG" id="hsa:51759"/>
<dbReference type="MANE-Select" id="ENST00000372447.7">
    <property type="protein sequence ID" value="ENSP00000361524.3"/>
    <property type="RefSeq nucleotide sequence ID" value="NM_016520.3"/>
    <property type="RefSeq protein sequence ID" value="NP_057604.1"/>
</dbReference>
<dbReference type="UCSC" id="uc004byp.4">
    <property type="organism name" value="human"/>
</dbReference>
<dbReference type="AGR" id="HGNC:24932"/>
<dbReference type="CTD" id="51759"/>
<dbReference type="GeneCards" id="C9orf78"/>
<dbReference type="HGNC" id="HGNC:24932">
    <property type="gene designation" value="C9orf78"/>
</dbReference>
<dbReference type="HPA" id="ENSG00000136819">
    <property type="expression patterns" value="Low tissue specificity"/>
</dbReference>
<dbReference type="MIM" id="619569">
    <property type="type" value="gene"/>
</dbReference>
<dbReference type="neXtProt" id="NX_Q9NZ63"/>
<dbReference type="OpenTargets" id="ENSG00000136819"/>
<dbReference type="PharmGKB" id="PA134929438"/>
<dbReference type="VEuPathDB" id="HostDB:ENSG00000136819"/>
<dbReference type="eggNOG" id="KOG3345">
    <property type="taxonomic scope" value="Eukaryota"/>
</dbReference>
<dbReference type="GeneTree" id="ENSGT00390000009787"/>
<dbReference type="HOGENOM" id="CLU_053736_1_0_1"/>
<dbReference type="InParanoid" id="Q9NZ63"/>
<dbReference type="OMA" id="NIKTGGM"/>
<dbReference type="OrthoDB" id="5627at2759"/>
<dbReference type="PAN-GO" id="Q9NZ63">
    <property type="GO annotations" value="2 GO annotations based on evolutionary models"/>
</dbReference>
<dbReference type="PhylomeDB" id="Q9NZ63"/>
<dbReference type="TreeFam" id="TF105871"/>
<dbReference type="PathwayCommons" id="Q9NZ63"/>
<dbReference type="Reactome" id="R-HSA-72163">
    <property type="pathway name" value="mRNA Splicing - Major Pathway"/>
</dbReference>
<dbReference type="SignaLink" id="Q9NZ63"/>
<dbReference type="SIGNOR" id="Q9NZ63"/>
<dbReference type="BioGRID-ORCS" id="51759">
    <property type="hits" value="386 hits in 1144 CRISPR screens"/>
</dbReference>
<dbReference type="ChiTaRS" id="C9orf78">
    <property type="organism name" value="human"/>
</dbReference>
<dbReference type="GeneWiki" id="C9orf78"/>
<dbReference type="GenomeRNAi" id="51759"/>
<dbReference type="Pharos" id="Q9NZ63">
    <property type="development level" value="Tdark"/>
</dbReference>
<dbReference type="PRO" id="PR:Q9NZ63"/>
<dbReference type="Proteomes" id="UP000005640">
    <property type="component" value="Chromosome 9"/>
</dbReference>
<dbReference type="RNAct" id="Q9NZ63">
    <property type="molecule type" value="protein"/>
</dbReference>
<dbReference type="Bgee" id="ENSG00000136819">
    <property type="expression patterns" value="Expressed in monocyte and 200 other cell types or tissues"/>
</dbReference>
<dbReference type="GO" id="GO:0000775">
    <property type="term" value="C:chromosome, centromeric region"/>
    <property type="evidence" value="ECO:0000314"/>
    <property type="project" value="UniProtKB"/>
</dbReference>
<dbReference type="GO" id="GO:0005829">
    <property type="term" value="C:cytosol"/>
    <property type="evidence" value="ECO:0000314"/>
    <property type="project" value="HPA"/>
</dbReference>
<dbReference type="GO" id="GO:0005654">
    <property type="term" value="C:nucleoplasm"/>
    <property type="evidence" value="ECO:0000314"/>
    <property type="project" value="HPA"/>
</dbReference>
<dbReference type="GO" id="GO:0005634">
    <property type="term" value="C:nucleus"/>
    <property type="evidence" value="ECO:0000314"/>
    <property type="project" value="UniProtKB"/>
</dbReference>
<dbReference type="GO" id="GO:0005681">
    <property type="term" value="C:spliceosomal complex"/>
    <property type="evidence" value="ECO:0000318"/>
    <property type="project" value="GO_Central"/>
</dbReference>
<dbReference type="GO" id="GO:0030623">
    <property type="term" value="F:U5 snRNA binding"/>
    <property type="evidence" value="ECO:0000314"/>
    <property type="project" value="UniProtKB"/>
</dbReference>
<dbReference type="GO" id="GO:0007059">
    <property type="term" value="P:chromosome segregation"/>
    <property type="evidence" value="ECO:0007669"/>
    <property type="project" value="UniProtKB-KW"/>
</dbReference>
<dbReference type="GO" id="GO:0045292">
    <property type="term" value="P:mRNA cis splicing, via spliceosome"/>
    <property type="evidence" value="ECO:0000315"/>
    <property type="project" value="UniProtKB"/>
</dbReference>
<dbReference type="GO" id="GO:0000398">
    <property type="term" value="P:mRNA splicing, via spliceosome"/>
    <property type="evidence" value="ECO:0000318"/>
    <property type="project" value="GO_Central"/>
</dbReference>
<dbReference type="GO" id="GO:0060629">
    <property type="term" value="P:regulation of homologous chromosome segregation"/>
    <property type="evidence" value="ECO:0000315"/>
    <property type="project" value="UniProtKB"/>
</dbReference>
<dbReference type="InterPro" id="IPR010756">
    <property type="entry name" value="Tls1-like"/>
</dbReference>
<dbReference type="PANTHER" id="PTHR13486:SF2">
    <property type="entry name" value="SPLICING FACTOR C9ORF78"/>
    <property type="match status" value="1"/>
</dbReference>
<dbReference type="PANTHER" id="PTHR13486">
    <property type="entry name" value="TELOMERE LENGTH AND SILENCING PROTEIN 1 TLS1 FAMILY MEMBER"/>
    <property type="match status" value="1"/>
</dbReference>
<dbReference type="Pfam" id="PF07052">
    <property type="entry name" value="Hep_59"/>
    <property type="match status" value="1"/>
</dbReference>
<name>TLS1_HUMAN</name>
<keyword id="KW-0002">3D-structure</keyword>
<keyword id="KW-0137">Centromere</keyword>
<keyword id="KW-0158">Chromosome</keyword>
<keyword id="KW-0159">Chromosome partition</keyword>
<keyword id="KW-0507">mRNA processing</keyword>
<keyword id="KW-0508">mRNA splicing</keyword>
<keyword id="KW-0539">Nucleus</keyword>
<keyword id="KW-0597">Phosphoprotein</keyword>
<keyword id="KW-1267">Proteomics identification</keyword>
<keyword id="KW-1185">Reference proteome</keyword>
<keyword id="KW-0694">RNA-binding</keyword>
<keyword id="KW-0747">Spliceosome</keyword>
<organism>
    <name type="scientific">Homo sapiens</name>
    <name type="common">Human</name>
    <dbReference type="NCBI Taxonomy" id="9606"/>
    <lineage>
        <taxon>Eukaryota</taxon>
        <taxon>Metazoa</taxon>
        <taxon>Chordata</taxon>
        <taxon>Craniata</taxon>
        <taxon>Vertebrata</taxon>
        <taxon>Euteleostomi</taxon>
        <taxon>Mammalia</taxon>
        <taxon>Eutheria</taxon>
        <taxon>Euarchontoglires</taxon>
        <taxon>Primates</taxon>
        <taxon>Haplorrhini</taxon>
        <taxon>Catarrhini</taxon>
        <taxon>Hominidae</taxon>
        <taxon>Homo</taxon>
    </lineage>
</organism>
<evidence type="ECO:0000256" key="1">
    <source>
        <dbReference type="SAM" id="MobiDB-lite"/>
    </source>
</evidence>
<evidence type="ECO:0000269" key="2">
    <source>
    </source>
</evidence>
<evidence type="ECO:0000269" key="3">
    <source>
    </source>
</evidence>
<evidence type="ECO:0000303" key="4">
    <source>
    </source>
</evidence>
<evidence type="ECO:0000305" key="5"/>
<evidence type="ECO:0007744" key="6">
    <source>
        <dbReference type="PDB" id="7OS2"/>
    </source>
</evidence>
<evidence type="ECO:0007744" key="7">
    <source>
    </source>
</evidence>
<evidence type="ECO:0007744" key="8">
    <source>
    </source>
</evidence>
<evidence type="ECO:0007744" key="9">
    <source>
    </source>
</evidence>
<evidence type="ECO:0007744" key="10">
    <source>
    </source>
</evidence>
<evidence type="ECO:0007744" key="11">
    <source>
    </source>
</evidence>
<evidence type="ECO:0007744" key="12">
    <source>
    </source>
</evidence>
<evidence type="ECO:0007744" key="13">
    <source>
    </source>
</evidence>
<evidence type="ECO:0007744" key="14">
    <source>
    </source>
</evidence>
<evidence type="ECO:0007829" key="15">
    <source>
        <dbReference type="PDB" id="7OS2"/>
    </source>
</evidence>
<proteinExistence type="evidence at protein level"/>
<feature type="chain" id="PRO_0000227523" description="Splicing factor C9orf78">
    <location>
        <begin position="1"/>
        <end position="289"/>
    </location>
</feature>
<feature type="region of interest" description="Disordered" evidence="1">
    <location>
        <begin position="1"/>
        <end position="27"/>
    </location>
</feature>
<feature type="region of interest" description="Interaction with SNRNP200" evidence="3 6">
    <location>
        <begin position="5"/>
        <end position="58"/>
    </location>
</feature>
<feature type="region of interest" description="Disordered" evidence="1">
    <location>
        <begin position="232"/>
        <end position="289"/>
    </location>
</feature>
<feature type="compositionally biased region" description="Basic residues" evidence="1">
    <location>
        <begin position="1"/>
        <end position="12"/>
    </location>
</feature>
<feature type="compositionally biased region" description="Basic and acidic residues" evidence="1">
    <location>
        <begin position="232"/>
        <end position="283"/>
    </location>
</feature>
<feature type="modified residue" description="Phosphoserine" evidence="9 10 11 13">
    <location>
        <position position="15"/>
    </location>
</feature>
<feature type="modified residue" description="Phosphoserine" evidence="9 10 11 13">
    <location>
        <position position="17"/>
    </location>
</feature>
<feature type="modified residue" description="Phosphotyrosine" evidence="7">
    <location>
        <position position="147"/>
    </location>
</feature>
<feature type="modified residue" description="Phosphothreonine" evidence="11 14">
    <location>
        <position position="253"/>
    </location>
</feature>
<feature type="modified residue" description="Phosphoserine" evidence="8 9 11 12 13">
    <location>
        <position position="261"/>
    </location>
</feature>
<feature type="sequence variant" id="VAR_050828" description="In dbSNP:rs1237745.">
    <original>Q</original>
    <variation>H</variation>
    <location>
        <position position="70"/>
    </location>
</feature>
<feature type="mutagenesis site" description="Decreases binding to SNRNP200." evidence="3">
    <original>F</original>
    <variation>A</variation>
    <location>
        <position position="8"/>
    </location>
</feature>
<feature type="mutagenesis site" description="Abolishes binding to SNRNP200." evidence="3">
    <original>R</original>
    <variation>A</variation>
    <location>
        <position position="41"/>
    </location>
</feature>
<feature type="sequence conflict" description="In Ref. 5; AAH17570." evidence="5" ref="5">
    <original>P</original>
    <variation>S</variation>
    <location>
        <position position="139"/>
    </location>
</feature>
<feature type="sequence conflict" description="In Ref. 5; AAH17570." evidence="5" ref="5">
    <original>N</original>
    <variation>S</variation>
    <location>
        <position position="203"/>
    </location>
</feature>
<feature type="helix" evidence="15">
    <location>
        <begin position="14"/>
        <end position="18"/>
    </location>
</feature>
<feature type="helix" evidence="15">
    <location>
        <begin position="21"/>
        <end position="40"/>
    </location>
</feature>
<feature type="strand" evidence="15">
    <location>
        <begin position="46"/>
        <end position="48"/>
    </location>
</feature>
<feature type="helix" evidence="15">
    <location>
        <begin position="49"/>
        <end position="54"/>
    </location>
</feature>
<accession>Q9NZ63</accession>
<accession>B3KPX8</accession>
<accession>Q8WVU6</accession>
<accession>Q9NT39</accession>